<feature type="chain" id="PRO_0000109522" description="Inactive signal peptidase IA">
    <location>
        <begin position="1"/>
        <end position="174"/>
    </location>
</feature>
<feature type="topological domain" description="Cytoplasmic" evidence="2">
    <location>
        <begin position="1"/>
        <end position="7"/>
    </location>
</feature>
<feature type="transmembrane region" description="Helical" evidence="2">
    <location>
        <begin position="8"/>
        <end position="28"/>
    </location>
</feature>
<feature type="topological domain" description="Extracellular" evidence="2">
    <location>
        <begin position="29"/>
        <end position="174"/>
    </location>
</feature>
<name>LEPH_STAAR</name>
<accession>Q6GIC4</accession>
<comment type="function">
    <text evidence="1">Catalytically inactive.</text>
</comment>
<comment type="subcellular location">
    <subcellularLocation>
        <location evidence="3">Cell membrane</location>
        <topology evidence="3">Single-pass type II membrane protein</topology>
    </subcellularLocation>
</comment>
<comment type="similarity">
    <text evidence="3">Belongs to the peptidase S26 family.</text>
</comment>
<organism>
    <name type="scientific">Staphylococcus aureus (strain MRSA252)</name>
    <dbReference type="NCBI Taxonomy" id="282458"/>
    <lineage>
        <taxon>Bacteria</taxon>
        <taxon>Bacillati</taxon>
        <taxon>Bacillota</taxon>
        <taxon>Bacilli</taxon>
        <taxon>Bacillales</taxon>
        <taxon>Staphylococcaceae</taxon>
        <taxon>Staphylococcus</taxon>
    </lineage>
</organism>
<evidence type="ECO:0000250" key="1"/>
<evidence type="ECO:0000255" key="2"/>
<evidence type="ECO:0000305" key="3"/>
<reference key="1">
    <citation type="journal article" date="2004" name="Proc. Natl. Acad. Sci. U.S.A.">
        <title>Complete genomes of two clinical Staphylococcus aureus strains: evidence for the rapid evolution of virulence and drug resistance.</title>
        <authorList>
            <person name="Holden M.T.G."/>
            <person name="Feil E.J."/>
            <person name="Lindsay J.A."/>
            <person name="Peacock S.J."/>
            <person name="Day N.P.J."/>
            <person name="Enright M.C."/>
            <person name="Foster T.J."/>
            <person name="Moore C.E."/>
            <person name="Hurst L."/>
            <person name="Atkin R."/>
            <person name="Barron A."/>
            <person name="Bason N."/>
            <person name="Bentley S.D."/>
            <person name="Chillingworth C."/>
            <person name="Chillingworth T."/>
            <person name="Churcher C."/>
            <person name="Clark L."/>
            <person name="Corton C."/>
            <person name="Cronin A."/>
            <person name="Doggett J."/>
            <person name="Dowd L."/>
            <person name="Feltwell T."/>
            <person name="Hance Z."/>
            <person name="Harris B."/>
            <person name="Hauser H."/>
            <person name="Holroyd S."/>
            <person name="Jagels K."/>
            <person name="James K.D."/>
            <person name="Lennard N."/>
            <person name="Line A."/>
            <person name="Mayes R."/>
            <person name="Moule S."/>
            <person name="Mungall K."/>
            <person name="Ormond D."/>
            <person name="Quail M.A."/>
            <person name="Rabbinowitsch E."/>
            <person name="Rutherford K.M."/>
            <person name="Sanders M."/>
            <person name="Sharp S."/>
            <person name="Simmonds M."/>
            <person name="Stevens K."/>
            <person name="Whitehead S."/>
            <person name="Barrell B.G."/>
            <person name="Spratt B.G."/>
            <person name="Parkhill J."/>
        </authorList>
    </citation>
    <scope>NUCLEOTIDE SEQUENCE [LARGE SCALE GENOMIC DNA]</scope>
    <source>
        <strain>MRSA252</strain>
    </source>
</reference>
<proteinExistence type="inferred from homology"/>
<gene>
    <name type="primary">spsA</name>
    <name type="ordered locus">SAR0926</name>
</gene>
<protein>
    <recommendedName>
        <fullName>Inactive signal peptidase IA</fullName>
    </recommendedName>
</protein>
<dbReference type="EMBL" id="BX571856">
    <property type="protein sequence ID" value="CAG39932.1"/>
    <property type="molecule type" value="Genomic_DNA"/>
</dbReference>
<dbReference type="SMR" id="Q6GIC4"/>
<dbReference type="KEGG" id="sar:SAR0926"/>
<dbReference type="HOGENOM" id="CLU_028723_5_0_9"/>
<dbReference type="Proteomes" id="UP000000596">
    <property type="component" value="Chromosome"/>
</dbReference>
<dbReference type="GO" id="GO:0005886">
    <property type="term" value="C:plasma membrane"/>
    <property type="evidence" value="ECO:0007669"/>
    <property type="project" value="UniProtKB-SubCell"/>
</dbReference>
<dbReference type="GO" id="GO:0004252">
    <property type="term" value="F:serine-type endopeptidase activity"/>
    <property type="evidence" value="ECO:0007669"/>
    <property type="project" value="InterPro"/>
</dbReference>
<dbReference type="GO" id="GO:0006465">
    <property type="term" value="P:signal peptide processing"/>
    <property type="evidence" value="ECO:0007669"/>
    <property type="project" value="InterPro"/>
</dbReference>
<dbReference type="CDD" id="cd06530">
    <property type="entry name" value="S26_SPase_I"/>
    <property type="match status" value="1"/>
</dbReference>
<dbReference type="Gene3D" id="2.10.109.10">
    <property type="entry name" value="Umud Fragment, subunit A"/>
    <property type="match status" value="1"/>
</dbReference>
<dbReference type="InterPro" id="IPR036286">
    <property type="entry name" value="LexA/Signal_pep-like_sf"/>
</dbReference>
<dbReference type="InterPro" id="IPR000223">
    <property type="entry name" value="Pept_S26A_signal_pept_1"/>
</dbReference>
<dbReference type="InterPro" id="IPR019533">
    <property type="entry name" value="Peptidase_S26"/>
</dbReference>
<dbReference type="NCBIfam" id="TIGR02227">
    <property type="entry name" value="sigpep_I_bact"/>
    <property type="match status" value="1"/>
</dbReference>
<dbReference type="PANTHER" id="PTHR43390:SF1">
    <property type="entry name" value="CHLOROPLAST PROCESSING PEPTIDASE"/>
    <property type="match status" value="1"/>
</dbReference>
<dbReference type="PANTHER" id="PTHR43390">
    <property type="entry name" value="SIGNAL PEPTIDASE I"/>
    <property type="match status" value="1"/>
</dbReference>
<dbReference type="Pfam" id="PF10502">
    <property type="entry name" value="Peptidase_S26"/>
    <property type="match status" value="1"/>
</dbReference>
<dbReference type="PRINTS" id="PR00727">
    <property type="entry name" value="LEADERPTASE"/>
</dbReference>
<dbReference type="SUPFAM" id="SSF51306">
    <property type="entry name" value="LexA/Signal peptidase"/>
    <property type="match status" value="1"/>
</dbReference>
<keyword id="KW-1003">Cell membrane</keyword>
<keyword id="KW-0472">Membrane</keyword>
<keyword id="KW-0812">Transmembrane</keyword>
<keyword id="KW-1133">Transmembrane helix</keyword>
<sequence>MKKVVKYLISLILAIIIVLFVQTFVIVGHVIPNNDMSPTLNKGDRVIVNKIKVTFNQLNNGDIITYRRGNEIYTSRIIAKPGQSMAFRQGQLYRDDRPVDASYAKNRKIKDFSLRNFKKLDGDIIPPNNFVVLNDHDNNQHDSRQFGLIDKKDIIGNISLRYYPFSKWTIQFKS</sequence>